<evidence type="ECO:0000250" key="1"/>
<evidence type="ECO:0000305" key="2"/>
<evidence type="ECO:0007829" key="3">
    <source>
        <dbReference type="PDB" id="1HF2"/>
    </source>
</evidence>
<protein>
    <recommendedName>
        <fullName>Probable septum site-determining protein MinC</fullName>
    </recommendedName>
</protein>
<gene>
    <name type="primary">minC</name>
    <name type="ordered locus">TM_1047</name>
</gene>
<dbReference type="EMBL" id="AE000512">
    <property type="protein sequence ID" value="AAD36124.1"/>
    <property type="molecule type" value="Genomic_DNA"/>
</dbReference>
<dbReference type="PIR" id="A72301">
    <property type="entry name" value="A72301"/>
</dbReference>
<dbReference type="RefSeq" id="NP_228853.1">
    <property type="nucleotide sequence ID" value="NC_000853.1"/>
</dbReference>
<dbReference type="RefSeq" id="WP_008193407.1">
    <property type="nucleotide sequence ID" value="NZ_CP011107.1"/>
</dbReference>
<dbReference type="PDB" id="1HF2">
    <property type="method" value="X-ray"/>
    <property type="resolution" value="2.20 A"/>
    <property type="chains" value="A/B/C/D=1-210"/>
</dbReference>
<dbReference type="PDBsum" id="1HF2"/>
<dbReference type="SMR" id="Q9X0D7"/>
<dbReference type="STRING" id="243274.TM_1047"/>
<dbReference type="PaxDb" id="243274-THEMA_09125"/>
<dbReference type="EnsemblBacteria" id="AAD36124">
    <property type="protein sequence ID" value="AAD36124"/>
    <property type="gene ID" value="TM_1047"/>
</dbReference>
<dbReference type="KEGG" id="tma:TM1047"/>
<dbReference type="KEGG" id="tmi:THEMA_09125"/>
<dbReference type="KEGG" id="tmm:Tmari_1051"/>
<dbReference type="KEGG" id="tmw:THMA_1069"/>
<dbReference type="eggNOG" id="COG0850">
    <property type="taxonomic scope" value="Bacteria"/>
</dbReference>
<dbReference type="InParanoid" id="Q9X0D7"/>
<dbReference type="OrthoDB" id="37128at2"/>
<dbReference type="EvolutionaryTrace" id="Q9X0D7"/>
<dbReference type="Proteomes" id="UP000008183">
    <property type="component" value="Chromosome"/>
</dbReference>
<dbReference type="GO" id="GO:0000902">
    <property type="term" value="P:cell morphogenesis"/>
    <property type="evidence" value="ECO:0007669"/>
    <property type="project" value="InterPro"/>
</dbReference>
<dbReference type="GO" id="GO:0000917">
    <property type="term" value="P:division septum assembly"/>
    <property type="evidence" value="ECO:0007669"/>
    <property type="project" value="UniProtKB-KW"/>
</dbReference>
<dbReference type="GO" id="GO:0051302">
    <property type="term" value="P:regulation of cell division"/>
    <property type="evidence" value="ECO:0007669"/>
    <property type="project" value="InterPro"/>
</dbReference>
<dbReference type="GO" id="GO:1901891">
    <property type="term" value="P:regulation of cell septum assembly"/>
    <property type="evidence" value="ECO:0007669"/>
    <property type="project" value="InterPro"/>
</dbReference>
<dbReference type="Gene3D" id="2.160.20.70">
    <property type="match status" value="1"/>
</dbReference>
<dbReference type="Gene3D" id="3.30.750.50">
    <property type="entry name" value="Cell-division inhibitor MinC, N-terminal domain"/>
    <property type="match status" value="1"/>
</dbReference>
<dbReference type="HAMAP" id="MF_00267">
    <property type="entry name" value="MinC"/>
    <property type="match status" value="1"/>
</dbReference>
<dbReference type="InterPro" id="IPR016098">
    <property type="entry name" value="CAP/MinC_C"/>
</dbReference>
<dbReference type="InterPro" id="IPR013033">
    <property type="entry name" value="MinC"/>
</dbReference>
<dbReference type="InterPro" id="IPR036145">
    <property type="entry name" value="MinC_C_sf"/>
</dbReference>
<dbReference type="InterPro" id="IPR007874">
    <property type="entry name" value="MinC_N"/>
</dbReference>
<dbReference type="InterPro" id="IPR005526">
    <property type="entry name" value="Septum_form_inhib_MinC_C"/>
</dbReference>
<dbReference type="NCBIfam" id="TIGR01222">
    <property type="entry name" value="minC"/>
    <property type="match status" value="1"/>
</dbReference>
<dbReference type="NCBIfam" id="NF010598">
    <property type="entry name" value="PRK13992.1"/>
    <property type="match status" value="1"/>
</dbReference>
<dbReference type="PANTHER" id="PTHR34108">
    <property type="entry name" value="SEPTUM SITE-DETERMINING PROTEIN MINC"/>
    <property type="match status" value="1"/>
</dbReference>
<dbReference type="PANTHER" id="PTHR34108:SF1">
    <property type="entry name" value="SEPTUM SITE-DETERMINING PROTEIN MINC"/>
    <property type="match status" value="1"/>
</dbReference>
<dbReference type="Pfam" id="PF03775">
    <property type="entry name" value="MinC_C"/>
    <property type="match status" value="1"/>
</dbReference>
<dbReference type="Pfam" id="PF05209">
    <property type="entry name" value="MinC_N"/>
    <property type="match status" value="1"/>
</dbReference>
<dbReference type="SUPFAM" id="SSF63848">
    <property type="entry name" value="Cell-division inhibitor MinC, C-terminal domain"/>
    <property type="match status" value="1"/>
</dbReference>
<dbReference type="SUPFAM" id="SSF64043">
    <property type="entry name" value="Cell-division inhibitor MinC, N-terminal domain"/>
    <property type="match status" value="1"/>
</dbReference>
<comment type="function">
    <text evidence="1">Cell division inhibitor that blocks the formation of polar Z ring septums. Rapidly oscillates between the poles of the cell to destabilize FtsZ filaments that have formed before they mature into polar Z rings. Prevents FtsZ polymerization (By similarity).</text>
</comment>
<comment type="subunit">
    <text evidence="1">Interacts with MinD and FtsZ.</text>
</comment>
<comment type="similarity">
    <text evidence="2">Belongs to the MinC family.</text>
</comment>
<keyword id="KW-0002">3D-structure</keyword>
<keyword id="KW-0131">Cell cycle</keyword>
<keyword id="KW-0132">Cell division</keyword>
<keyword id="KW-1185">Reference proteome</keyword>
<keyword id="KW-0717">Septation</keyword>
<accession>Q9X0D7</accession>
<reference key="1">
    <citation type="journal article" date="1999" name="Nature">
        <title>Evidence for lateral gene transfer between Archaea and Bacteria from genome sequence of Thermotoga maritima.</title>
        <authorList>
            <person name="Nelson K.E."/>
            <person name="Clayton R.A."/>
            <person name="Gill S.R."/>
            <person name="Gwinn M.L."/>
            <person name="Dodson R.J."/>
            <person name="Haft D.H."/>
            <person name="Hickey E.K."/>
            <person name="Peterson J.D."/>
            <person name="Nelson W.C."/>
            <person name="Ketchum K.A."/>
            <person name="McDonald L.A."/>
            <person name="Utterback T.R."/>
            <person name="Malek J.A."/>
            <person name="Linher K.D."/>
            <person name="Garrett M.M."/>
            <person name="Stewart A.M."/>
            <person name="Cotton M.D."/>
            <person name="Pratt M.S."/>
            <person name="Phillips C.A."/>
            <person name="Richardson D.L."/>
            <person name="Heidelberg J.F."/>
            <person name="Sutton G.G."/>
            <person name="Fleischmann R.D."/>
            <person name="Eisen J.A."/>
            <person name="White O."/>
            <person name="Salzberg S.L."/>
            <person name="Smith H.O."/>
            <person name="Venter J.C."/>
            <person name="Fraser C.M."/>
        </authorList>
    </citation>
    <scope>NUCLEOTIDE SEQUENCE [LARGE SCALE GENOMIC DNA]</scope>
    <source>
        <strain>ATCC 43589 / DSM 3109 / JCM 10099 / NBRC 100826 / MSB8</strain>
    </source>
</reference>
<sequence length="210" mass="22727">MVDFKMTKEGLVLLIKDYQNLEEVLNAISARITQMGGFFAKGDRISLMIENHNKHSQDIPRIVSHLRNLGLEVSQILVGSTVEGKENDLKVQSRTTVESTGKVIKRNIRSGQTVVHSGDVIVFGNVNKGAEILAGGSVVVFGKAQGNIRAGLNEGGQAVVAALDLQTSLIQIAGFITHSKGEENVPSIAHVKGNRIVIEPFDKVSFERSE</sequence>
<feature type="chain" id="PRO_0000189066" description="Probable septum site-determining protein MinC">
    <location>
        <begin position="1"/>
        <end position="210"/>
    </location>
</feature>
<feature type="strand" evidence="3">
    <location>
        <begin position="2"/>
        <end position="7"/>
    </location>
</feature>
<feature type="strand" evidence="3">
    <location>
        <begin position="10"/>
        <end position="15"/>
    </location>
</feature>
<feature type="helix" evidence="3">
    <location>
        <begin position="21"/>
        <end position="34"/>
    </location>
</feature>
<feature type="helix" evidence="3">
    <location>
        <begin position="36"/>
        <end position="38"/>
    </location>
</feature>
<feature type="strand" evidence="3">
    <location>
        <begin position="44"/>
        <end position="49"/>
    </location>
</feature>
<feature type="helix" evidence="3">
    <location>
        <begin position="52"/>
        <end position="55"/>
    </location>
</feature>
<feature type="helix" evidence="3">
    <location>
        <begin position="56"/>
        <end position="58"/>
    </location>
</feature>
<feature type="helix" evidence="3">
    <location>
        <begin position="59"/>
        <end position="68"/>
    </location>
</feature>
<feature type="strand" evidence="3">
    <location>
        <begin position="72"/>
        <end position="77"/>
    </location>
</feature>
<feature type="strand" evidence="3">
    <location>
        <begin position="80"/>
        <end position="82"/>
    </location>
</feature>
<feature type="strand" evidence="3">
    <location>
        <begin position="85"/>
        <end position="89"/>
    </location>
</feature>
<feature type="strand" evidence="3">
    <location>
        <begin position="94"/>
        <end position="97"/>
    </location>
</feature>
<feature type="strand" evidence="3">
    <location>
        <begin position="102"/>
        <end position="104"/>
    </location>
</feature>
<feature type="strand" evidence="3">
    <location>
        <begin position="112"/>
        <end position="118"/>
    </location>
</feature>
<feature type="strand" evidence="3">
    <location>
        <begin position="120"/>
        <end position="124"/>
    </location>
</feature>
<feature type="strand" evidence="3">
    <location>
        <begin position="131"/>
        <end position="136"/>
    </location>
</feature>
<feature type="strand" evidence="3">
    <location>
        <begin position="138"/>
        <end position="144"/>
    </location>
</feature>
<feature type="strand" evidence="3">
    <location>
        <begin position="146"/>
        <end position="150"/>
    </location>
</feature>
<feature type="turn" evidence="3">
    <location>
        <begin position="152"/>
        <end position="154"/>
    </location>
</feature>
<feature type="strand" evidence="3">
    <location>
        <begin position="159"/>
        <end position="165"/>
    </location>
</feature>
<feature type="strand" evidence="3">
    <location>
        <begin position="168"/>
        <end position="172"/>
    </location>
</feature>
<feature type="strand" evidence="3">
    <location>
        <begin position="175"/>
        <end position="177"/>
    </location>
</feature>
<feature type="strand" evidence="3">
    <location>
        <begin position="187"/>
        <end position="192"/>
    </location>
</feature>
<feature type="strand" evidence="3">
    <location>
        <begin position="195"/>
        <end position="200"/>
    </location>
</feature>
<feature type="helix" evidence="3">
    <location>
        <begin position="201"/>
        <end position="203"/>
    </location>
</feature>
<proteinExistence type="evidence at protein level"/>
<name>MINC_THEMA</name>
<organism>
    <name type="scientific">Thermotoga maritima (strain ATCC 43589 / DSM 3109 / JCM 10099 / NBRC 100826 / MSB8)</name>
    <dbReference type="NCBI Taxonomy" id="243274"/>
    <lineage>
        <taxon>Bacteria</taxon>
        <taxon>Thermotogati</taxon>
        <taxon>Thermotogota</taxon>
        <taxon>Thermotogae</taxon>
        <taxon>Thermotogales</taxon>
        <taxon>Thermotogaceae</taxon>
        <taxon>Thermotoga</taxon>
    </lineage>
</organism>